<dbReference type="EMBL" id="L23967">
    <property type="protein sequence ID" value="AAA65876.1"/>
    <property type="molecule type" value="Genomic_DNA"/>
</dbReference>
<dbReference type="EMBL" id="Z49865">
    <property type="protein sequence ID" value="CAA90023.1"/>
    <property type="molecule type" value="Genomic_DNA"/>
</dbReference>
<dbReference type="PIR" id="JL0100">
    <property type="entry name" value="LPSE5"/>
</dbReference>
<dbReference type="RefSeq" id="WP_029376348.1">
    <property type="nucleotide sequence ID" value="NZ_SCHF01000025.1"/>
</dbReference>
<dbReference type="TCDB" id="1.C.20.2.1">
    <property type="family name" value="the nisin (nisin) family"/>
</dbReference>
<dbReference type="GO" id="GO:0005102">
    <property type="term" value="F:signaling receptor binding"/>
    <property type="evidence" value="ECO:0007669"/>
    <property type="project" value="UniProtKB-KW"/>
</dbReference>
<dbReference type="GO" id="GO:0042742">
    <property type="term" value="P:defense response to bacterium"/>
    <property type="evidence" value="ECO:0007669"/>
    <property type="project" value="UniProtKB-KW"/>
</dbReference>
<dbReference type="GO" id="GO:0031640">
    <property type="term" value="P:killing of cells of another organism"/>
    <property type="evidence" value="ECO:0007669"/>
    <property type="project" value="UniProtKB-KW"/>
</dbReference>
<dbReference type="InterPro" id="IPR012519">
    <property type="entry name" value="Lantibiotic_typ-A_Pep5"/>
</dbReference>
<dbReference type="Pfam" id="PF08130">
    <property type="entry name" value="Antimicrobial18"/>
    <property type="match status" value="1"/>
</dbReference>
<name>LANP_STAEP</name>
<feature type="propeptide" id="PRO_0000017140" evidence="2">
    <location>
        <begin position="1"/>
        <end position="26"/>
    </location>
</feature>
<feature type="peptide" id="PRO_0000017141" description="Lantibiotic Pep5">
    <location>
        <begin position="27"/>
        <end position="60"/>
    </location>
</feature>
<feature type="region of interest" description="Disordered" evidence="1">
    <location>
        <begin position="1"/>
        <end position="29"/>
    </location>
</feature>
<feature type="modified residue" description="2-oxobutanoic acid" evidence="4">
    <location>
        <position position="27"/>
    </location>
</feature>
<feature type="modified residue" description="2,3-didehydrobutyrine" evidence="4">
    <location>
        <position position="42"/>
    </location>
</feature>
<feature type="modified residue" description="2,3-didehydrobutyrine" evidence="4">
    <location>
        <position position="46"/>
    </location>
</feature>
<feature type="cross-link" description="Lanthionine (Ser-Cys)" evidence="4">
    <location>
        <begin position="35"/>
        <end position="39"/>
    </location>
</feature>
<feature type="cross-link" description="Beta-methyllanthionine (Thr-Cys)" evidence="4">
    <location>
        <begin position="50"/>
        <end position="53"/>
    </location>
</feature>
<feature type="cross-link" description="Lanthionine (Ser-Cys)" evidence="4">
    <location>
        <begin position="52"/>
        <end position="59"/>
    </location>
</feature>
<keyword id="KW-0044">Antibiotic</keyword>
<keyword id="KW-0929">Antimicrobial</keyword>
<keyword id="KW-0078">Bacteriocin</keyword>
<keyword id="KW-0903">Direct protein sequencing</keyword>
<keyword id="KW-0425">Lantibiotic</keyword>
<keyword id="KW-0614">Plasmid</keyword>
<keyword id="KW-0883">Thioether bond</keyword>
<proteinExistence type="evidence at protein level"/>
<reference key="1">
    <citation type="journal article" date="1989" name="Arch. Microbiol.">
        <title>Pep5, a new lantibiotic: structural gene isolation and prepeptide sequence.</title>
        <authorList>
            <person name="Kaletta C."/>
            <person name="Entian K.-D."/>
            <person name="Kellner R."/>
            <person name="Jung G."/>
            <person name="Reis M."/>
            <person name="Sahl H.-G."/>
        </authorList>
    </citation>
    <scope>NUCLEOTIDE SEQUENCE [GENOMIC DNA]</scope>
    <source>
        <strain>5</strain>
    </source>
</reference>
<reference key="2">
    <citation type="journal article" date="1995" name="Eur. J. Biochem.">
        <title>Nucleotide sequence of the lantibiotic Pep5 biosynthetic gene cluster and functional analysis of PepP and PepC. Evidence for a role of PepC in thioether formation.</title>
        <authorList>
            <person name="Meyer C."/>
            <person name="Bierbaum G."/>
            <person name="Heidrich C."/>
            <person name="Reis M."/>
            <person name="Suling J."/>
            <person name="Iglesias-Wind M."/>
            <person name="Kempter C."/>
            <person name="Molitor E."/>
            <person name="Sahl H.-G."/>
        </authorList>
    </citation>
    <scope>NUCLEOTIDE SEQUENCE [GENOMIC DNA]</scope>
    <source>
        <strain>5</strain>
    </source>
</reference>
<reference key="3">
    <citation type="journal article" date="1990" name="Eur. J. Biochem.">
        <title>Biosynthesis of the lantibiotic Pep5. Isolation and characterization of a prepeptide containing dehydroamino acids.</title>
        <authorList>
            <person name="Weil H.-P."/>
            <person name="Beck-Sickinger A.G."/>
            <person name="Metzger J."/>
            <person name="Stevanovic S."/>
            <person name="Jung G."/>
            <person name="Josten M."/>
        </authorList>
    </citation>
    <scope>PROTEIN SEQUENCE OF 1-26</scope>
    <scope>DEHYDRATION AT THR-42 AND THR-46</scope>
    <scope>OXOBUTANOIC ACID FORMATION AT THR-27</scope>
    <scope>LANTHIONINE CROSS-LINKS</scope>
</reference>
<protein>
    <recommendedName>
        <fullName>Lantibiotic Pep5</fullName>
    </recommendedName>
</protein>
<sequence length="60" mass="6685">MKNNKNLFDLEIKKETSQNTDELEPQTAGPAIRASVKQCQKTLKATRLFTVSCKGKNGCK</sequence>
<geneLocation type="plasmid"/>
<evidence type="ECO:0000256" key="1">
    <source>
        <dbReference type="SAM" id="MobiDB-lite"/>
    </source>
</evidence>
<evidence type="ECO:0000269" key="2">
    <source>
    </source>
</evidence>
<evidence type="ECO:0000305" key="3"/>
<evidence type="ECO:0000305" key="4">
    <source>
    </source>
</evidence>
<organism>
    <name type="scientific">Staphylococcus epidermidis</name>
    <dbReference type="NCBI Taxonomy" id="1282"/>
    <lineage>
        <taxon>Bacteria</taxon>
        <taxon>Bacillati</taxon>
        <taxon>Bacillota</taxon>
        <taxon>Bacilli</taxon>
        <taxon>Bacillales</taxon>
        <taxon>Staphylococcaceae</taxon>
        <taxon>Staphylococcus</taxon>
    </lineage>
</organism>
<gene>
    <name type="primary">pepA</name>
</gene>
<comment type="function">
    <text>Lanthionine-containing peptide antibiotic (lantibiotic) active on Gram-positive bacteria. The bactericidal activity of lantibiotics is based on depolarization of energized bacterial cytoplasmic membranes, initiated by the formation of aqueous transmembrane pores.</text>
</comment>
<comment type="PTM">
    <text>Maturation of lantibiotics involves the enzymatic conversion of Thr, and Ser into dehydrated AA and the formation of thioether bonds with cysteine. This is followed by membrane translocation and cleavage of the modified precursor.</text>
</comment>
<comment type="PTM">
    <text>After proteolysis of the propeptide, the N-terminal 2,3-didehydrobutyrine hydrolyzes to 2-oxobutanoic acid, possibly spontaneously.</text>
</comment>
<comment type="similarity">
    <text evidence="3">Belongs to the type A lantibiotic family.</text>
</comment>
<accession>P19578</accession>